<gene>
    <name type="primary">aldA</name>
</gene>
<feature type="chain" id="PRO_0000056435" description="Aldehyde dehydrogenase">
    <location>
        <begin position="1"/>
        <end position="500"/>
    </location>
</feature>
<feature type="active site" description="Proton acceptor" evidence="2 3">
    <location>
        <position position="269"/>
    </location>
</feature>
<feature type="active site" description="Nucleophile" evidence="2 3">
    <location>
        <position position="303"/>
    </location>
</feature>
<feature type="binding site" evidence="1">
    <location>
        <begin position="246"/>
        <end position="251"/>
    </location>
    <ligand>
        <name>NAD(+)</name>
        <dbReference type="ChEBI" id="CHEBI:57540"/>
    </ligand>
</feature>
<feature type="site" description="Transition state stabilizer" evidence="1">
    <location>
        <position position="170"/>
    </location>
</feature>
<sequence>MPSIFTHQWDTPVYKGSTSINTGLFINGEFVDGVKNTTIDVVNPANGKLITKISEATEADIDIAVEAAHKAFETTWGLNCSGSKRGDMLYKLAQLMEKNIDDLSAIEALDNGKTFLWAKSVDLSLSISTIKHYAGWADKNFGQVIETDEKKLTYSRHEPIGVVGQIIPWNFPLLMLAWKIGPALATGNCIVLKPSEFTPLSALRMCALIQEAGFPPGVVNVVTGYGSTTGQAISSHMKIDKVAFTGSTLVGRKVMEAAAKSNLKNVTLELGGKSPVVIFDDADLEQSVNWTAHGLFWNHGQACCAGTRIFVQEGIYDKFLQKFTDKIKEIKLGDPFGLGIDQGPQVSQIQYDRIMSYIESGRAEGATVHVGGERHGNEGYFIQPTIFTDTTPDMKIVKEEIFGPVGAVIKFKDGKEVIKQANDSNYGLAAAVFSQDINKAIETAHAFKAGTAWVNCANTIDAGVPFGGYKQSGIGRELGEYALHNYTNVKAVHVNLNWKM</sequence>
<dbReference type="EC" id="1.2.1.3"/>
<dbReference type="EMBL" id="Y17825">
    <property type="protein sequence ID" value="CAA76875.1"/>
    <property type="molecule type" value="Genomic_DNA"/>
</dbReference>
<dbReference type="SMR" id="O74187"/>
<dbReference type="UniPathway" id="UPA00780">
    <property type="reaction ID" value="UER00768"/>
</dbReference>
<dbReference type="GO" id="GO:0004029">
    <property type="term" value="F:aldehyde dehydrogenase (NAD+) activity"/>
    <property type="evidence" value="ECO:0007669"/>
    <property type="project" value="UniProtKB-EC"/>
</dbReference>
<dbReference type="GO" id="GO:0006068">
    <property type="term" value="P:ethanol catabolic process"/>
    <property type="evidence" value="ECO:0007669"/>
    <property type="project" value="UniProtKB-UniPathway"/>
</dbReference>
<dbReference type="CDD" id="cd07143">
    <property type="entry name" value="ALDH_AldA_AN0554"/>
    <property type="match status" value="1"/>
</dbReference>
<dbReference type="FunFam" id="3.40.605.10:FF:000050">
    <property type="entry name" value="Aldehyde dehydrogenase, mitochondrial"/>
    <property type="match status" value="1"/>
</dbReference>
<dbReference type="FunFam" id="3.40.605.10:FF:000026">
    <property type="entry name" value="Aldehyde dehydrogenase, putative"/>
    <property type="match status" value="1"/>
</dbReference>
<dbReference type="FunFam" id="3.40.309.10:FF:000001">
    <property type="entry name" value="Mitochondrial aldehyde dehydrogenase 2"/>
    <property type="match status" value="1"/>
</dbReference>
<dbReference type="Gene3D" id="3.40.605.10">
    <property type="entry name" value="Aldehyde Dehydrogenase, Chain A, domain 1"/>
    <property type="match status" value="1"/>
</dbReference>
<dbReference type="Gene3D" id="3.40.309.10">
    <property type="entry name" value="Aldehyde Dehydrogenase, Chain A, domain 2"/>
    <property type="match status" value="1"/>
</dbReference>
<dbReference type="InterPro" id="IPR016161">
    <property type="entry name" value="Ald_DH/histidinol_DH"/>
</dbReference>
<dbReference type="InterPro" id="IPR016163">
    <property type="entry name" value="Ald_DH_C"/>
</dbReference>
<dbReference type="InterPro" id="IPR016160">
    <property type="entry name" value="Ald_DH_CS_CYS"/>
</dbReference>
<dbReference type="InterPro" id="IPR029510">
    <property type="entry name" value="Ald_DH_CS_GLU"/>
</dbReference>
<dbReference type="InterPro" id="IPR016162">
    <property type="entry name" value="Ald_DH_N"/>
</dbReference>
<dbReference type="InterPro" id="IPR015590">
    <property type="entry name" value="Aldehyde_DH_dom"/>
</dbReference>
<dbReference type="PANTHER" id="PTHR11699">
    <property type="entry name" value="ALDEHYDE DEHYDROGENASE-RELATED"/>
    <property type="match status" value="1"/>
</dbReference>
<dbReference type="Pfam" id="PF00171">
    <property type="entry name" value="Aldedh"/>
    <property type="match status" value="1"/>
</dbReference>
<dbReference type="SUPFAM" id="SSF53720">
    <property type="entry name" value="ALDH-like"/>
    <property type="match status" value="1"/>
</dbReference>
<dbReference type="PROSITE" id="PS00070">
    <property type="entry name" value="ALDEHYDE_DEHYDR_CYS"/>
    <property type="match status" value="1"/>
</dbReference>
<dbReference type="PROSITE" id="PS00687">
    <property type="entry name" value="ALDEHYDE_DEHYDR_GLU"/>
    <property type="match status" value="1"/>
</dbReference>
<accession>O74187</accession>
<protein>
    <recommendedName>
        <fullName>Aldehyde dehydrogenase</fullName>
        <shortName>ALDDH</shortName>
        <shortName>ALDH</shortName>
        <ecNumber>1.2.1.3</ecNumber>
    </recommendedName>
</protein>
<proteinExistence type="inferred from homology"/>
<comment type="catalytic activity">
    <reaction>
        <text>an aldehyde + NAD(+) + H2O = a carboxylate + NADH + 2 H(+)</text>
        <dbReference type="Rhea" id="RHEA:16185"/>
        <dbReference type="ChEBI" id="CHEBI:15377"/>
        <dbReference type="ChEBI" id="CHEBI:15378"/>
        <dbReference type="ChEBI" id="CHEBI:17478"/>
        <dbReference type="ChEBI" id="CHEBI:29067"/>
        <dbReference type="ChEBI" id="CHEBI:57540"/>
        <dbReference type="ChEBI" id="CHEBI:57945"/>
        <dbReference type="EC" id="1.2.1.3"/>
    </reaction>
</comment>
<comment type="pathway">
    <text>Alcohol metabolism; ethanol degradation; acetate from ethanol: step 2/2.</text>
</comment>
<comment type="similarity">
    <text evidence="4">Belongs to the aldehyde dehydrogenase family.</text>
</comment>
<evidence type="ECO:0000250" key="1"/>
<evidence type="ECO:0000255" key="2">
    <source>
        <dbReference type="PROSITE-ProRule" id="PRU10007"/>
    </source>
</evidence>
<evidence type="ECO:0000255" key="3">
    <source>
        <dbReference type="PROSITE-ProRule" id="PRU10008"/>
    </source>
</evidence>
<evidence type="ECO:0000305" key="4"/>
<reference key="1">
    <citation type="submission" date="1998-07" db="EMBL/GenBank/DDBJ databases">
        <title>Molecular structure and spatial expression of housekeeping genes in mushrooms.</title>
        <authorList>
            <person name="Schaap P.J."/>
            <person name="Mueller Y."/>
            <person name="Visser J."/>
        </authorList>
    </citation>
    <scope>NUCLEOTIDE SEQUENCE [GENOMIC DNA]</scope>
    <source>
        <strain>Horst H39</strain>
    </source>
</reference>
<name>ALDH_AGABI</name>
<organism>
    <name type="scientific">Agaricus bisporus</name>
    <name type="common">White button mushroom</name>
    <dbReference type="NCBI Taxonomy" id="5341"/>
    <lineage>
        <taxon>Eukaryota</taxon>
        <taxon>Fungi</taxon>
        <taxon>Dikarya</taxon>
        <taxon>Basidiomycota</taxon>
        <taxon>Agaricomycotina</taxon>
        <taxon>Agaricomycetes</taxon>
        <taxon>Agaricomycetidae</taxon>
        <taxon>Agaricales</taxon>
        <taxon>Agaricineae</taxon>
        <taxon>Agaricaceae</taxon>
        <taxon>Agaricus</taxon>
    </lineage>
</organism>
<keyword id="KW-0520">NAD</keyword>
<keyword id="KW-0560">Oxidoreductase</keyword>